<evidence type="ECO:0000255" key="1">
    <source>
        <dbReference type="HAMAP-Rule" id="MF_00727"/>
    </source>
</evidence>
<accession>B7IVK0</accession>
<feature type="chain" id="PRO_1000197966" description="Protein-glutamine gamma-glutamyltransferase">
    <location>
        <begin position="1"/>
        <end position="276"/>
    </location>
</feature>
<keyword id="KW-0012">Acyltransferase</keyword>
<keyword id="KW-0749">Sporulation</keyword>
<keyword id="KW-0808">Transferase</keyword>
<sequence length="276" mass="31534">MIVIGRSIVHPYITNEYEPFAAEKQQILSIMAGNQEVYSFRTADELSFDLNLRVNIIISALELFQSGFQFRTFQQSFCNPQYWKRTSLGGFELLPNIPPSIAIQDIFKNGKLYGTECATAMIIIFYKALLSLYEEETFNRLFANLLLYTWDYDQDLRLITKTGGDLVPGDLVYFKNPQVNPATIEWQGENTIYLGNFFFYGHGVGVKTKEEIIYSLNERRVPYAFISAFLTDTITRIDSRIMSQYASSSTPQTSISFIPIRDDAIVATVGHTTTIY</sequence>
<proteinExistence type="inferred from homology"/>
<organism>
    <name type="scientific">Bacillus cereus (strain G9842)</name>
    <dbReference type="NCBI Taxonomy" id="405531"/>
    <lineage>
        <taxon>Bacteria</taxon>
        <taxon>Bacillati</taxon>
        <taxon>Bacillota</taxon>
        <taxon>Bacilli</taxon>
        <taxon>Bacillales</taxon>
        <taxon>Bacillaceae</taxon>
        <taxon>Bacillus</taxon>
        <taxon>Bacillus cereus group</taxon>
    </lineage>
</organism>
<comment type="function">
    <text evidence="1">Probably plays a role in the assembly of the spore coat proteins by catalyzing epsilon-(gamma-glutamyl)lysine cross-links.</text>
</comment>
<comment type="catalytic activity">
    <reaction evidence="1">
        <text>L-glutaminyl-[protein] + L-lysyl-[protein] = [protein]-L-lysyl-N(6)-5-L-glutamyl-[protein] + NH4(+)</text>
        <dbReference type="Rhea" id="RHEA:54816"/>
        <dbReference type="Rhea" id="RHEA-COMP:9752"/>
        <dbReference type="Rhea" id="RHEA-COMP:10207"/>
        <dbReference type="Rhea" id="RHEA-COMP:14005"/>
        <dbReference type="ChEBI" id="CHEBI:28938"/>
        <dbReference type="ChEBI" id="CHEBI:29969"/>
        <dbReference type="ChEBI" id="CHEBI:30011"/>
        <dbReference type="ChEBI" id="CHEBI:138370"/>
        <dbReference type="EC" id="2.3.2.13"/>
    </reaction>
</comment>
<comment type="similarity">
    <text evidence="1">Belongs to the bacillus TGase family.</text>
</comment>
<protein>
    <recommendedName>
        <fullName evidence="1">Protein-glutamine gamma-glutamyltransferase</fullName>
        <ecNumber evidence="1">2.3.2.13</ecNumber>
    </recommendedName>
    <alternativeName>
        <fullName evidence="1">Transglutaminase</fullName>
        <shortName evidence="1">TGase</shortName>
    </alternativeName>
</protein>
<gene>
    <name evidence="1" type="primary">tgl</name>
    <name type="ordered locus">BCG9842_B1174</name>
</gene>
<name>TGL_BACC2</name>
<reference key="1">
    <citation type="submission" date="2008-10" db="EMBL/GenBank/DDBJ databases">
        <title>Genome sequence of Bacillus cereus G9842.</title>
        <authorList>
            <person name="Dodson R.J."/>
            <person name="Durkin A.S."/>
            <person name="Rosovitz M.J."/>
            <person name="Rasko D.A."/>
            <person name="Hoffmaster A."/>
            <person name="Ravel J."/>
            <person name="Sutton G."/>
        </authorList>
    </citation>
    <scope>NUCLEOTIDE SEQUENCE [LARGE SCALE GENOMIC DNA]</scope>
    <source>
        <strain>G9842</strain>
    </source>
</reference>
<dbReference type="EC" id="2.3.2.13" evidence="1"/>
<dbReference type="EMBL" id="CP001186">
    <property type="protein sequence ID" value="ACK98116.1"/>
    <property type="molecule type" value="Genomic_DNA"/>
</dbReference>
<dbReference type="RefSeq" id="WP_000635339.1">
    <property type="nucleotide sequence ID" value="NC_011772.1"/>
</dbReference>
<dbReference type="SMR" id="B7IVK0"/>
<dbReference type="KEGG" id="bcg:BCG9842_B1174"/>
<dbReference type="HOGENOM" id="CLU_088922_0_0_9"/>
<dbReference type="Proteomes" id="UP000006744">
    <property type="component" value="Chromosome"/>
</dbReference>
<dbReference type="GO" id="GO:0003810">
    <property type="term" value="F:protein-glutamine gamma-glutamyltransferase activity"/>
    <property type="evidence" value="ECO:0007669"/>
    <property type="project" value="UniProtKB-UniRule"/>
</dbReference>
<dbReference type="GO" id="GO:0030435">
    <property type="term" value="P:sporulation resulting in formation of a cellular spore"/>
    <property type="evidence" value="ECO:0007669"/>
    <property type="project" value="UniProtKB-UniRule"/>
</dbReference>
<dbReference type="HAMAP" id="MF_00727">
    <property type="entry name" value="Tgl"/>
    <property type="match status" value="1"/>
</dbReference>
<dbReference type="InterPro" id="IPR020916">
    <property type="entry name" value="Gln_gamma-glutamylTfrase_bac"/>
</dbReference>
<dbReference type="NCBIfam" id="NF002869">
    <property type="entry name" value="PRK03187.1"/>
    <property type="match status" value="1"/>
</dbReference>
<dbReference type="Pfam" id="PF20085">
    <property type="entry name" value="TGL"/>
    <property type="match status" value="1"/>
</dbReference>